<proteinExistence type="inferred from homology"/>
<protein>
    <recommendedName>
        <fullName evidence="1">Proteasome-associated ATPase</fullName>
    </recommendedName>
    <alternativeName>
        <fullName evidence="1">AAA ATPase forming ring-shaped complexes</fullName>
        <shortName evidence="1">ARC</shortName>
    </alternativeName>
    <alternativeName>
        <fullName evidence="1">Mycobacterial proteasome ATPase</fullName>
    </alternativeName>
</protein>
<organism>
    <name type="scientific">Mycolicibacterium gilvum (strain PYR-GCK)</name>
    <name type="common">Mycobacterium gilvum (strain PYR-GCK)</name>
    <dbReference type="NCBI Taxonomy" id="350054"/>
    <lineage>
        <taxon>Bacteria</taxon>
        <taxon>Bacillati</taxon>
        <taxon>Actinomycetota</taxon>
        <taxon>Actinomycetes</taxon>
        <taxon>Mycobacteriales</taxon>
        <taxon>Mycobacteriaceae</taxon>
        <taxon>Mycolicibacterium</taxon>
    </lineage>
</organism>
<evidence type="ECO:0000255" key="1">
    <source>
        <dbReference type="HAMAP-Rule" id="MF_02112"/>
    </source>
</evidence>
<evidence type="ECO:0000256" key="2">
    <source>
        <dbReference type="SAM" id="MobiDB-lite"/>
    </source>
</evidence>
<name>ARC_MYCGI</name>
<keyword id="KW-0067">ATP-binding</keyword>
<keyword id="KW-0143">Chaperone</keyword>
<keyword id="KW-0175">Coiled coil</keyword>
<keyword id="KW-0547">Nucleotide-binding</keyword>
<keyword id="KW-0647">Proteasome</keyword>
<reference key="1">
    <citation type="submission" date="2007-04" db="EMBL/GenBank/DDBJ databases">
        <title>Complete sequence of chromosome of Mycobacterium gilvum PYR-GCK.</title>
        <authorList>
            <consortium name="US DOE Joint Genome Institute"/>
            <person name="Copeland A."/>
            <person name="Lucas S."/>
            <person name="Lapidus A."/>
            <person name="Barry K."/>
            <person name="Detter J.C."/>
            <person name="Glavina del Rio T."/>
            <person name="Hammon N."/>
            <person name="Israni S."/>
            <person name="Dalin E."/>
            <person name="Tice H."/>
            <person name="Pitluck S."/>
            <person name="Chain P."/>
            <person name="Malfatti S."/>
            <person name="Shin M."/>
            <person name="Vergez L."/>
            <person name="Schmutz J."/>
            <person name="Larimer F."/>
            <person name="Land M."/>
            <person name="Hauser L."/>
            <person name="Kyrpides N."/>
            <person name="Mikhailova N."/>
            <person name="Miller C."/>
            <person name="Richardson P."/>
        </authorList>
    </citation>
    <scope>NUCLEOTIDE SEQUENCE [LARGE SCALE GENOMIC DNA]</scope>
    <source>
        <strain>PYR-GCK</strain>
    </source>
</reference>
<gene>
    <name evidence="1" type="primary">mpa</name>
    <name type="ordered locus">Mflv_3069</name>
</gene>
<sequence length="615" mass="68021">MSESERPEAGDGTDALGASPDTPLSSEDAAELEQLRREASVLREQLADAAGTIGSARSVRDVHQLEARIDSLAARNAKLMDTLKEARQQLLALREEVDRLGQPPSGYGVLLSVQDDETVDVFTSGRRMRLTCSPNIDTKGLKKGQTVRLNEALTVVEAGHFESVGEISTLREILADGHRALVVGHADEERIVWLAEPLVASADLPDGYDDDLGDDRPRKLRPGDSLLVDTKAGYAFERVPKAEVEDLVLEEVPDVSYNDIGGLGRQIEQIRDAVELPFLHKELYREYSLRPPKGVLLYGPPGCGKTLIAKAVANSLAKKMAEVRGDDAREAKSYFLNIKGPELLNKFVGETERHIRLIFQRAREKASEGTPVIVFFDEMDSIFRTRGTGVSSDVETTVVPQLLSEIDGVEGLENVIVIGASNREDMIDPAILRPGRLDVKIKIERPDAESAMDIFSKYLTDELPIHEDDLSEFSGDRSLTIKAMIEKVVDRMYAEIDDNRFLEVTYANGDKEVMYFKDFNSGAMIQNVVDRAKKNAIKAVLETGQRGLRIQHLLDSIVDEFAENEDLPNTTNPDDWARISGKKGERIVYIRTLVTGKSSSASRAIDTESNLGQYL</sequence>
<comment type="function">
    <text evidence="1">ATPase which is responsible for recognizing, binding, unfolding and translocation of pupylated proteins into the bacterial 20S proteasome core particle. May be essential for opening the gate of the 20S proteasome via an interaction with its C-terminus, thereby allowing substrate entry and access to the site of proteolysis. Thus, the C-termini of the proteasomal ATPase may function like a 'key in a lock' to induce gate opening and therefore regulate proteolysis.</text>
</comment>
<comment type="pathway">
    <text evidence="1">Protein degradation; proteasomal Pup-dependent pathway.</text>
</comment>
<comment type="subunit">
    <text evidence="1">Homohexamer. Assembles into a hexameric ring structure that caps the 20S proteasome core. Strongly interacts with the prokaryotic ubiquitin-like protein Pup through a hydrophobic interface; the interacting region of ARC lies in its N-terminal coiled-coil domain. There is one Pup binding site per ARC hexamer ring. Upon ATP-binding, the C-terminus of ARC interacts with the alpha-rings of the proteasome core, possibly by binding to the intersubunit pockets.</text>
</comment>
<comment type="domain">
    <text evidence="1">Consists of three main regions, an N-terminal coiled-coil domain that binds to protein Pup and functions as a docking station, an interdomain involved in ARC hexamerization, and a C-terminal ATPase domain of the AAA type.</text>
</comment>
<comment type="similarity">
    <text evidence="1">Belongs to the AAA ATPase family.</text>
</comment>
<dbReference type="EMBL" id="CP000656">
    <property type="protein sequence ID" value="ABP45546.1"/>
    <property type="molecule type" value="Genomic_DNA"/>
</dbReference>
<dbReference type="SMR" id="A4TB65"/>
<dbReference type="STRING" id="350054.Mflv_3069"/>
<dbReference type="KEGG" id="mgi:Mflv_3069"/>
<dbReference type="eggNOG" id="COG1222">
    <property type="taxonomic scope" value="Bacteria"/>
</dbReference>
<dbReference type="HOGENOM" id="CLU_036054_0_0_11"/>
<dbReference type="OrthoDB" id="9809379at2"/>
<dbReference type="UniPathway" id="UPA00997"/>
<dbReference type="GO" id="GO:0000502">
    <property type="term" value="C:proteasome complex"/>
    <property type="evidence" value="ECO:0007669"/>
    <property type="project" value="UniProtKB-KW"/>
</dbReference>
<dbReference type="GO" id="GO:0005524">
    <property type="term" value="F:ATP binding"/>
    <property type="evidence" value="ECO:0007669"/>
    <property type="project" value="UniProtKB-UniRule"/>
</dbReference>
<dbReference type="GO" id="GO:0016887">
    <property type="term" value="F:ATP hydrolysis activity"/>
    <property type="evidence" value="ECO:0007669"/>
    <property type="project" value="UniProtKB-UniRule"/>
</dbReference>
<dbReference type="GO" id="GO:0019941">
    <property type="term" value="P:modification-dependent protein catabolic process"/>
    <property type="evidence" value="ECO:0007669"/>
    <property type="project" value="InterPro"/>
</dbReference>
<dbReference type="GO" id="GO:0010498">
    <property type="term" value="P:proteasomal protein catabolic process"/>
    <property type="evidence" value="ECO:0007669"/>
    <property type="project" value="InterPro"/>
</dbReference>
<dbReference type="FunFam" id="1.20.5.170:FF:000018">
    <property type="entry name" value="AAA ATPase forming ring-shaped complexes"/>
    <property type="match status" value="1"/>
</dbReference>
<dbReference type="FunFam" id="2.40.50.140:FF:000169">
    <property type="entry name" value="AAA ATPase forming ring-shaped complexes"/>
    <property type="match status" value="1"/>
</dbReference>
<dbReference type="FunFam" id="3.40.50.300:FF:000155">
    <property type="entry name" value="AAA ATPase forming ring-shaped complexes"/>
    <property type="match status" value="1"/>
</dbReference>
<dbReference type="Gene3D" id="1.10.8.60">
    <property type="match status" value="1"/>
</dbReference>
<dbReference type="Gene3D" id="1.20.5.170">
    <property type="match status" value="1"/>
</dbReference>
<dbReference type="Gene3D" id="2.40.50.140">
    <property type="entry name" value="Nucleic acid-binding proteins"/>
    <property type="match status" value="2"/>
</dbReference>
<dbReference type="Gene3D" id="3.40.50.300">
    <property type="entry name" value="P-loop containing nucleotide triphosphate hydrolases"/>
    <property type="match status" value="1"/>
</dbReference>
<dbReference type="HAMAP" id="MF_02112">
    <property type="entry name" value="ARC_ATPase"/>
    <property type="match status" value="1"/>
</dbReference>
<dbReference type="InterPro" id="IPR003593">
    <property type="entry name" value="AAA+_ATPase"/>
</dbReference>
<dbReference type="InterPro" id="IPR050168">
    <property type="entry name" value="AAA_ATPase_domain"/>
</dbReference>
<dbReference type="InterPro" id="IPR003959">
    <property type="entry name" value="ATPase_AAA_core"/>
</dbReference>
<dbReference type="InterPro" id="IPR003960">
    <property type="entry name" value="ATPase_AAA_CS"/>
</dbReference>
<dbReference type="InterPro" id="IPR012340">
    <property type="entry name" value="NA-bd_OB-fold"/>
</dbReference>
<dbReference type="InterPro" id="IPR027417">
    <property type="entry name" value="P-loop_NTPase"/>
</dbReference>
<dbReference type="InterPro" id="IPR032501">
    <property type="entry name" value="Prot_ATP_ID_OB_2nd"/>
</dbReference>
<dbReference type="InterPro" id="IPR041626">
    <property type="entry name" value="Prot_ATP_ID_OB_N"/>
</dbReference>
<dbReference type="InterPro" id="IPR022482">
    <property type="entry name" value="Proteasome_ATPase"/>
</dbReference>
<dbReference type="NCBIfam" id="TIGR03689">
    <property type="entry name" value="pup_AAA"/>
    <property type="match status" value="1"/>
</dbReference>
<dbReference type="PANTHER" id="PTHR23077">
    <property type="entry name" value="AAA-FAMILY ATPASE"/>
    <property type="match status" value="1"/>
</dbReference>
<dbReference type="PANTHER" id="PTHR23077:SF144">
    <property type="entry name" value="PROTEASOME-ASSOCIATED ATPASE"/>
    <property type="match status" value="1"/>
</dbReference>
<dbReference type="Pfam" id="PF00004">
    <property type="entry name" value="AAA"/>
    <property type="match status" value="1"/>
</dbReference>
<dbReference type="Pfam" id="PF16450">
    <property type="entry name" value="Prot_ATP_ID_OB_C"/>
    <property type="match status" value="1"/>
</dbReference>
<dbReference type="Pfam" id="PF17758">
    <property type="entry name" value="Prot_ATP_ID_OB_N"/>
    <property type="match status" value="1"/>
</dbReference>
<dbReference type="SMART" id="SM00382">
    <property type="entry name" value="AAA"/>
    <property type="match status" value="1"/>
</dbReference>
<dbReference type="SUPFAM" id="SSF52540">
    <property type="entry name" value="P-loop containing nucleoside triphosphate hydrolases"/>
    <property type="match status" value="1"/>
</dbReference>
<dbReference type="PROSITE" id="PS00674">
    <property type="entry name" value="AAA"/>
    <property type="match status" value="1"/>
</dbReference>
<accession>A4TB65</accession>
<feature type="chain" id="PRO_0000396996" description="Proteasome-associated ATPase">
    <location>
        <begin position="1"/>
        <end position="615"/>
    </location>
</feature>
<feature type="region of interest" description="Disordered" evidence="2">
    <location>
        <begin position="1"/>
        <end position="36"/>
    </location>
</feature>
<feature type="region of interest" description="Docks into pockets in the proteasome alpha-ring" evidence="1">
    <location>
        <begin position="614"/>
        <end position="615"/>
    </location>
</feature>
<feature type="coiled-coil region" evidence="1">
    <location>
        <begin position="25"/>
        <end position="102"/>
    </location>
</feature>
<feature type="binding site" evidence="1">
    <location>
        <begin position="302"/>
        <end position="307"/>
    </location>
    <ligand>
        <name>ATP</name>
        <dbReference type="ChEBI" id="CHEBI:30616"/>
    </ligand>
</feature>